<comment type="function">
    <text evidence="1 3 4">Plant non-specific lipid-transfer proteins transfer phospholipids as well as galactolipids across membranes (By similarity). May play a role in wax or cutin deposition in the cell walls of expanding epidermal cells and certain secretory tissues (By similarity). Inhibits the growth of F.oxysporum and P.infestans (PubMed:19621049, Ref.1).</text>
</comment>
<comment type="tissue specificity">
    <text evidence="3 4">Seeds.</text>
</comment>
<comment type="mass spectrometry"/>
<comment type="similarity">
    <text evidence="2">Belongs to the plant LTP family.</text>
</comment>
<organism>
    <name type="scientific">Nigella sativa</name>
    <name type="common">Black cumin</name>
    <dbReference type="NCBI Taxonomy" id="555479"/>
    <lineage>
        <taxon>Eukaryota</taxon>
        <taxon>Viridiplantae</taxon>
        <taxon>Streptophyta</taxon>
        <taxon>Embryophyta</taxon>
        <taxon>Tracheophyta</taxon>
        <taxon>Spermatophyta</taxon>
        <taxon>Magnoliopsida</taxon>
        <taxon>Ranunculales</taxon>
        <taxon>Ranunculaceae</taxon>
        <taxon>Ranunculoideae</taxon>
        <taxon>Nigelleae</taxon>
        <taxon>Nigella</taxon>
    </lineage>
</organism>
<accession>P86527</accession>
<evidence type="ECO:0000250" key="1">
    <source>
        <dbReference type="UniProtKB" id="P81402"/>
    </source>
</evidence>
<evidence type="ECO:0000255" key="2"/>
<evidence type="ECO:0000269" key="3">
    <source>
    </source>
</evidence>
<evidence type="ECO:0000269" key="4">
    <source ref="1"/>
</evidence>
<evidence type="ECO:0000303" key="5">
    <source>
    </source>
</evidence>
<evidence type="ECO:0000303" key="6">
    <source ref="1"/>
</evidence>
<evidence type="ECO:0000305" key="7"/>
<sequence>ISCQDVKQSLAPCLPYVTGRAPKPAPGCCNGINHL</sequence>
<protein>
    <recommendedName>
        <fullName evidence="1 5">Non-specific lipid-transfer protein 1</fullName>
        <shortName evidence="1 5">LTP 1</shortName>
    </recommendedName>
</protein>
<name>NLTP1_NIGSA</name>
<feature type="chain" id="PRO_0000394465" description="Non-specific lipid-transfer protein 1">
    <location>
        <begin position="1"/>
        <end position="35" status="greater than"/>
    </location>
</feature>
<feature type="disulfide bond" evidence="1">
    <location>
        <begin position="3"/>
        <end status="unknown"/>
    </location>
</feature>
<feature type="disulfide bond" evidence="1">
    <location>
        <begin position="13"/>
        <end position="28"/>
    </location>
</feature>
<feature type="disulfide bond" evidence="1">
    <location>
        <begin position="29"/>
        <end status="unknown"/>
    </location>
</feature>
<feature type="non-terminal residue" evidence="6">
    <location>
        <position position="35"/>
    </location>
</feature>
<proteinExistence type="evidence at protein level"/>
<keyword id="KW-0929">Antimicrobial</keyword>
<keyword id="KW-0903">Direct protein sequencing</keyword>
<keyword id="KW-1015">Disulfide bond</keyword>
<keyword id="KW-0295">Fungicide</keyword>
<keyword id="KW-0446">Lipid-binding</keyword>
<keyword id="KW-0611">Plant defense</keyword>
<keyword id="KW-0813">Transport</keyword>
<dbReference type="SMR" id="P86527"/>
<dbReference type="GO" id="GO:0008289">
    <property type="term" value="F:lipid binding"/>
    <property type="evidence" value="ECO:0007669"/>
    <property type="project" value="UniProtKB-KW"/>
</dbReference>
<dbReference type="GO" id="GO:0050832">
    <property type="term" value="P:defense response to fungus"/>
    <property type="evidence" value="ECO:0007669"/>
    <property type="project" value="UniProtKB-KW"/>
</dbReference>
<dbReference type="GO" id="GO:0031640">
    <property type="term" value="P:killing of cells of another organism"/>
    <property type="evidence" value="ECO:0007669"/>
    <property type="project" value="UniProtKB-KW"/>
</dbReference>
<dbReference type="GO" id="GO:0006869">
    <property type="term" value="P:lipid transport"/>
    <property type="evidence" value="ECO:0007669"/>
    <property type="project" value="InterPro"/>
</dbReference>
<dbReference type="Gene3D" id="1.10.110.10">
    <property type="entry name" value="Plant lipid-transfer and hydrophobic proteins"/>
    <property type="match status" value="1"/>
</dbReference>
<dbReference type="InterPro" id="IPR036312">
    <property type="entry name" value="Bifun_inhib/LTP/seed_sf"/>
</dbReference>
<dbReference type="InterPro" id="IPR016140">
    <property type="entry name" value="Bifunc_inhib/LTP/seed_store"/>
</dbReference>
<dbReference type="InterPro" id="IPR000528">
    <property type="entry name" value="Plant_nsLTP"/>
</dbReference>
<dbReference type="Pfam" id="PF00234">
    <property type="entry name" value="Tryp_alpha_amyl"/>
    <property type="match status" value="1"/>
</dbReference>
<dbReference type="PRINTS" id="PR00382">
    <property type="entry name" value="LIPIDTRNSFER"/>
</dbReference>
<dbReference type="SUPFAM" id="SSF47699">
    <property type="entry name" value="Bifunctional inhibitor/lipid-transfer protein/seed storage 2S albumin"/>
    <property type="match status" value="1"/>
</dbReference>
<reference key="1">
    <citation type="submission" date="2022-03" db="UniProtKB">
        <title>Diversity of cationic antimicrobial peptides from blackseed (Nigella sativa).</title>
        <authorList>
            <person name="Barashkova A."/>
            <person name="Smirnov A."/>
            <person name="Rogozhin E.A."/>
            <person name="Zavries S."/>
        </authorList>
    </citation>
    <scope>PROTEIN SEQUENCE</scope>
    <scope>FUNCTION</scope>
    <scope>TISSUE SPECIFICITY</scope>
</reference>
<reference evidence="7" key="2">
    <citation type="journal article" date="2009" name="Bioorg. Khim.">
        <title>Isolation of the lipid-transporting protein Ns-LTP1 from seeds of the garden fennel flower (Nigella sativa).</title>
        <authorList>
            <person name="Oshchepkova I.U.I."/>
            <person name="Veshkurova O.N."/>
            <person name="Rogozhin E.A."/>
            <person name="Musoliamov A.K.H."/>
            <person name="Smirnov A.N."/>
            <person name="Odintsova T.I."/>
            <person name="Egorov T.S.A."/>
            <person name="Grishin E.V."/>
            <person name="Salikhov S.H.I."/>
        </authorList>
    </citation>
    <scope>PROTEIN SEQUENCE OF 1-25</scope>
    <scope>FUNCTION</scope>
    <scope>TISSUE SPECIFICITY</scope>
    <scope>MASS SPECTROMETRY</scope>
    <source>
        <tissue evidence="3">Seed</tissue>
    </source>
</reference>